<dbReference type="EMBL" id="BA000017">
    <property type="protein sequence ID" value="BAB57905.1"/>
    <property type="molecule type" value="Genomic_DNA"/>
</dbReference>
<dbReference type="RefSeq" id="WP_001091387.1">
    <property type="nucleotide sequence ID" value="NC_002758.2"/>
</dbReference>
<dbReference type="KEGG" id="sav:SAV1743"/>
<dbReference type="HOGENOM" id="CLU_085634_0_0_9"/>
<dbReference type="PhylomeDB" id="Q99TC1"/>
<dbReference type="Proteomes" id="UP000002481">
    <property type="component" value="Chromosome"/>
</dbReference>
<dbReference type="HAMAP" id="MF_01548">
    <property type="entry name" value="UPF0354"/>
    <property type="match status" value="1"/>
</dbReference>
<dbReference type="InterPro" id="IPR010838">
    <property type="entry name" value="DUF1444"/>
</dbReference>
<dbReference type="NCBIfam" id="NF010189">
    <property type="entry name" value="PRK13668.1"/>
    <property type="match status" value="1"/>
</dbReference>
<dbReference type="Pfam" id="PF07285">
    <property type="entry name" value="DUF1444"/>
    <property type="match status" value="1"/>
</dbReference>
<dbReference type="PIRSF" id="PIRSF012562">
    <property type="entry name" value="UCP012562"/>
    <property type="match status" value="1"/>
</dbReference>
<proteinExistence type="inferred from homology"/>
<feature type="chain" id="PRO_0000171110" description="UPF0354 protein SAV1743">
    <location>
        <begin position="1"/>
        <end position="285"/>
    </location>
</feature>
<reference key="1">
    <citation type="journal article" date="2001" name="Lancet">
        <title>Whole genome sequencing of meticillin-resistant Staphylococcus aureus.</title>
        <authorList>
            <person name="Kuroda M."/>
            <person name="Ohta T."/>
            <person name="Uchiyama I."/>
            <person name="Baba T."/>
            <person name="Yuzawa H."/>
            <person name="Kobayashi I."/>
            <person name="Cui L."/>
            <person name="Oguchi A."/>
            <person name="Aoki K."/>
            <person name="Nagai Y."/>
            <person name="Lian J.-Q."/>
            <person name="Ito T."/>
            <person name="Kanamori M."/>
            <person name="Matsumaru H."/>
            <person name="Maruyama A."/>
            <person name="Murakami H."/>
            <person name="Hosoyama A."/>
            <person name="Mizutani-Ui Y."/>
            <person name="Takahashi N.K."/>
            <person name="Sawano T."/>
            <person name="Inoue R."/>
            <person name="Kaito C."/>
            <person name="Sekimizu K."/>
            <person name="Hirakawa H."/>
            <person name="Kuhara S."/>
            <person name="Goto S."/>
            <person name="Yabuzaki J."/>
            <person name="Kanehisa M."/>
            <person name="Yamashita A."/>
            <person name="Oshima K."/>
            <person name="Furuya K."/>
            <person name="Yoshino C."/>
            <person name="Shiba T."/>
            <person name="Hattori M."/>
            <person name="Ogasawara N."/>
            <person name="Hayashi H."/>
            <person name="Hiramatsu K."/>
        </authorList>
    </citation>
    <scope>NUCLEOTIDE SEQUENCE [LARGE SCALE GENOMIC DNA]</scope>
    <source>
        <strain>Mu50 / ATCC 700699</strain>
    </source>
</reference>
<comment type="similarity">
    <text evidence="1">Belongs to the UPF0354 family.</text>
</comment>
<organism>
    <name type="scientific">Staphylococcus aureus (strain Mu50 / ATCC 700699)</name>
    <dbReference type="NCBI Taxonomy" id="158878"/>
    <lineage>
        <taxon>Bacteria</taxon>
        <taxon>Bacillati</taxon>
        <taxon>Bacillota</taxon>
        <taxon>Bacilli</taxon>
        <taxon>Bacillales</taxon>
        <taxon>Staphylococcaceae</taxon>
        <taxon>Staphylococcus</taxon>
    </lineage>
</organism>
<evidence type="ECO:0000255" key="1">
    <source>
        <dbReference type="HAMAP-Rule" id="MF_01548"/>
    </source>
</evidence>
<protein>
    <recommendedName>
        <fullName evidence="1">UPF0354 protein SAV1743</fullName>
    </recommendedName>
</protein>
<sequence length="285" mass="33070">MNTFQMRDKLKERLSHLDVDFKFNREEETLRIYRTDNNKGITIKLNAIVAKYEDKKEKIVDEIVYYVDEAIAQMADKTLESISSSQIMPVIRATSFDKKTKQGVPFIYDEHTAETAVYYAVDLGKSYRLIDESMLEDLKLTEQQIREMSLFNVRKLSNSYTTDEVKGNIFYFINSNDGYDASRILNTAFLNEIEAQCQGEMLVAVPHQDVLIIADIRNKTGYDVMAHLTMEFFTKGLVPITSLSFGYKQGHLEPIFILGKNNKQKRDPNVIQRLEANRRKFNKDK</sequence>
<gene>
    <name type="ordered locus">SAV1743</name>
</gene>
<accession>Q99TC1</accession>
<name>Y1743_STAAM</name>